<name>THIE_MARN8</name>
<protein>
    <recommendedName>
        <fullName evidence="1">Thiamine-phosphate synthase</fullName>
        <shortName evidence="1">TP synthase</shortName>
        <shortName evidence="1">TPS</shortName>
        <ecNumber evidence="1">2.5.1.3</ecNumber>
    </recommendedName>
    <alternativeName>
        <fullName evidence="1">Thiamine-phosphate pyrophosphorylase</fullName>
        <shortName evidence="1">TMP pyrophosphorylase</shortName>
        <shortName evidence="1">TMP-PPase</shortName>
    </alternativeName>
</protein>
<gene>
    <name evidence="1" type="primary">thiE</name>
    <name type="ordered locus">Maqu_0687</name>
</gene>
<organism>
    <name type="scientific">Marinobacter nauticus (strain ATCC 700491 / DSM 11845 / VT8)</name>
    <name type="common">Marinobacter aquaeolei</name>
    <dbReference type="NCBI Taxonomy" id="351348"/>
    <lineage>
        <taxon>Bacteria</taxon>
        <taxon>Pseudomonadati</taxon>
        <taxon>Pseudomonadota</taxon>
        <taxon>Gammaproteobacteria</taxon>
        <taxon>Pseudomonadales</taxon>
        <taxon>Marinobacteraceae</taxon>
        <taxon>Marinobacter</taxon>
    </lineage>
</organism>
<accession>A1TYG6</accession>
<keyword id="KW-0460">Magnesium</keyword>
<keyword id="KW-0479">Metal-binding</keyword>
<keyword id="KW-0784">Thiamine biosynthesis</keyword>
<keyword id="KW-0808">Transferase</keyword>
<evidence type="ECO:0000255" key="1">
    <source>
        <dbReference type="HAMAP-Rule" id="MF_00097"/>
    </source>
</evidence>
<feature type="chain" id="PRO_0000336404" description="Thiamine-phosphate synthase">
    <location>
        <begin position="1"/>
        <end position="222"/>
    </location>
</feature>
<feature type="binding site" evidence="1">
    <location>
        <begin position="42"/>
        <end position="46"/>
    </location>
    <ligand>
        <name>4-amino-2-methyl-5-(diphosphooxymethyl)pyrimidine</name>
        <dbReference type="ChEBI" id="CHEBI:57841"/>
    </ligand>
</feature>
<feature type="binding site" evidence="1">
    <location>
        <position position="74"/>
    </location>
    <ligand>
        <name>4-amino-2-methyl-5-(diphosphooxymethyl)pyrimidine</name>
        <dbReference type="ChEBI" id="CHEBI:57841"/>
    </ligand>
</feature>
<feature type="binding site" evidence="1">
    <location>
        <position position="75"/>
    </location>
    <ligand>
        <name>Mg(2+)</name>
        <dbReference type="ChEBI" id="CHEBI:18420"/>
    </ligand>
</feature>
<feature type="binding site" evidence="1">
    <location>
        <position position="94"/>
    </location>
    <ligand>
        <name>Mg(2+)</name>
        <dbReference type="ChEBI" id="CHEBI:18420"/>
    </ligand>
</feature>
<feature type="binding site" evidence="1">
    <location>
        <position position="113"/>
    </location>
    <ligand>
        <name>4-amino-2-methyl-5-(diphosphooxymethyl)pyrimidine</name>
        <dbReference type="ChEBI" id="CHEBI:57841"/>
    </ligand>
</feature>
<feature type="binding site" evidence="1">
    <location>
        <begin position="140"/>
        <end position="142"/>
    </location>
    <ligand>
        <name>2-[(2R,5Z)-2-carboxy-4-methylthiazol-5(2H)-ylidene]ethyl phosphate</name>
        <dbReference type="ChEBI" id="CHEBI:62899"/>
    </ligand>
</feature>
<feature type="binding site" evidence="1">
    <location>
        <position position="143"/>
    </location>
    <ligand>
        <name>4-amino-2-methyl-5-(diphosphooxymethyl)pyrimidine</name>
        <dbReference type="ChEBI" id="CHEBI:57841"/>
    </ligand>
</feature>
<feature type="binding site" evidence="1">
    <location>
        <position position="169"/>
    </location>
    <ligand>
        <name>2-[(2R,5Z)-2-carboxy-4-methylthiazol-5(2H)-ylidene]ethyl phosphate</name>
        <dbReference type="ChEBI" id="CHEBI:62899"/>
    </ligand>
</feature>
<sequence length="222" mass="23171">MGTVRSQIRPGLYAITDNRLTPADTLIVSVEAALAGGARLVQYRDKGSTASERLVQARNLNSLCQGFDVPLLINDDPELAARVGAAGVHLGQDDCSLVDARRLLGEHAIIGITCHHSLNLAQTAVDGGADYLAFGRFYDSATKPGAPPASPDVLTEAKALGLPITAIGGITGNNAEPLIRAGADLVAVVGGLFGGQPSDIEARAKAFNRQFARHHPLFSLSE</sequence>
<comment type="function">
    <text evidence="1">Condenses 4-methyl-5-(beta-hydroxyethyl)thiazole monophosphate (THZ-P) and 2-methyl-4-amino-5-hydroxymethyl pyrimidine pyrophosphate (HMP-PP) to form thiamine monophosphate (TMP).</text>
</comment>
<comment type="catalytic activity">
    <reaction evidence="1">
        <text>2-[(2R,5Z)-2-carboxy-4-methylthiazol-5(2H)-ylidene]ethyl phosphate + 4-amino-2-methyl-5-(diphosphooxymethyl)pyrimidine + 2 H(+) = thiamine phosphate + CO2 + diphosphate</text>
        <dbReference type="Rhea" id="RHEA:47844"/>
        <dbReference type="ChEBI" id="CHEBI:15378"/>
        <dbReference type="ChEBI" id="CHEBI:16526"/>
        <dbReference type="ChEBI" id="CHEBI:33019"/>
        <dbReference type="ChEBI" id="CHEBI:37575"/>
        <dbReference type="ChEBI" id="CHEBI:57841"/>
        <dbReference type="ChEBI" id="CHEBI:62899"/>
        <dbReference type="EC" id="2.5.1.3"/>
    </reaction>
</comment>
<comment type="catalytic activity">
    <reaction evidence="1">
        <text>2-(2-carboxy-4-methylthiazol-5-yl)ethyl phosphate + 4-amino-2-methyl-5-(diphosphooxymethyl)pyrimidine + 2 H(+) = thiamine phosphate + CO2 + diphosphate</text>
        <dbReference type="Rhea" id="RHEA:47848"/>
        <dbReference type="ChEBI" id="CHEBI:15378"/>
        <dbReference type="ChEBI" id="CHEBI:16526"/>
        <dbReference type="ChEBI" id="CHEBI:33019"/>
        <dbReference type="ChEBI" id="CHEBI:37575"/>
        <dbReference type="ChEBI" id="CHEBI:57841"/>
        <dbReference type="ChEBI" id="CHEBI:62890"/>
        <dbReference type="EC" id="2.5.1.3"/>
    </reaction>
</comment>
<comment type="catalytic activity">
    <reaction evidence="1">
        <text>4-methyl-5-(2-phosphooxyethyl)-thiazole + 4-amino-2-methyl-5-(diphosphooxymethyl)pyrimidine + H(+) = thiamine phosphate + diphosphate</text>
        <dbReference type="Rhea" id="RHEA:22328"/>
        <dbReference type="ChEBI" id="CHEBI:15378"/>
        <dbReference type="ChEBI" id="CHEBI:33019"/>
        <dbReference type="ChEBI" id="CHEBI:37575"/>
        <dbReference type="ChEBI" id="CHEBI:57841"/>
        <dbReference type="ChEBI" id="CHEBI:58296"/>
        <dbReference type="EC" id="2.5.1.3"/>
    </reaction>
</comment>
<comment type="cofactor">
    <cofactor evidence="1">
        <name>Mg(2+)</name>
        <dbReference type="ChEBI" id="CHEBI:18420"/>
    </cofactor>
    <text evidence="1">Binds 1 Mg(2+) ion per subunit.</text>
</comment>
<comment type="pathway">
    <text evidence="1">Cofactor biosynthesis; thiamine diphosphate biosynthesis; thiamine phosphate from 4-amino-2-methyl-5-diphosphomethylpyrimidine and 4-methyl-5-(2-phosphoethyl)-thiazole: step 1/1.</text>
</comment>
<comment type="similarity">
    <text evidence="1">Belongs to the thiamine-phosphate synthase family.</text>
</comment>
<dbReference type="EC" id="2.5.1.3" evidence="1"/>
<dbReference type="EMBL" id="CP000514">
    <property type="protein sequence ID" value="ABM17785.1"/>
    <property type="molecule type" value="Genomic_DNA"/>
</dbReference>
<dbReference type="RefSeq" id="WP_011784217.1">
    <property type="nucleotide sequence ID" value="NC_008740.1"/>
</dbReference>
<dbReference type="SMR" id="A1TYG6"/>
<dbReference type="STRING" id="351348.Maqu_0687"/>
<dbReference type="KEGG" id="maq:Maqu_0687"/>
<dbReference type="eggNOG" id="COG0352">
    <property type="taxonomic scope" value="Bacteria"/>
</dbReference>
<dbReference type="HOGENOM" id="CLU_018272_3_1_6"/>
<dbReference type="OrthoDB" id="9789949at2"/>
<dbReference type="UniPathway" id="UPA00060">
    <property type="reaction ID" value="UER00141"/>
</dbReference>
<dbReference type="Proteomes" id="UP000000998">
    <property type="component" value="Chromosome"/>
</dbReference>
<dbReference type="GO" id="GO:0005737">
    <property type="term" value="C:cytoplasm"/>
    <property type="evidence" value="ECO:0007669"/>
    <property type="project" value="TreeGrafter"/>
</dbReference>
<dbReference type="GO" id="GO:0000287">
    <property type="term" value="F:magnesium ion binding"/>
    <property type="evidence" value="ECO:0007669"/>
    <property type="project" value="UniProtKB-UniRule"/>
</dbReference>
<dbReference type="GO" id="GO:0004789">
    <property type="term" value="F:thiamine-phosphate diphosphorylase activity"/>
    <property type="evidence" value="ECO:0007669"/>
    <property type="project" value="UniProtKB-UniRule"/>
</dbReference>
<dbReference type="GO" id="GO:0009228">
    <property type="term" value="P:thiamine biosynthetic process"/>
    <property type="evidence" value="ECO:0007669"/>
    <property type="project" value="UniProtKB-KW"/>
</dbReference>
<dbReference type="GO" id="GO:0009229">
    <property type="term" value="P:thiamine diphosphate biosynthetic process"/>
    <property type="evidence" value="ECO:0007669"/>
    <property type="project" value="UniProtKB-UniRule"/>
</dbReference>
<dbReference type="CDD" id="cd00564">
    <property type="entry name" value="TMP_TenI"/>
    <property type="match status" value="1"/>
</dbReference>
<dbReference type="Gene3D" id="3.20.20.70">
    <property type="entry name" value="Aldolase class I"/>
    <property type="match status" value="1"/>
</dbReference>
<dbReference type="HAMAP" id="MF_00097">
    <property type="entry name" value="TMP_synthase"/>
    <property type="match status" value="1"/>
</dbReference>
<dbReference type="InterPro" id="IPR013785">
    <property type="entry name" value="Aldolase_TIM"/>
</dbReference>
<dbReference type="InterPro" id="IPR036206">
    <property type="entry name" value="ThiamineP_synth_sf"/>
</dbReference>
<dbReference type="InterPro" id="IPR022998">
    <property type="entry name" value="ThiamineP_synth_TenI"/>
</dbReference>
<dbReference type="InterPro" id="IPR034291">
    <property type="entry name" value="TMP_synthase"/>
</dbReference>
<dbReference type="NCBIfam" id="TIGR00693">
    <property type="entry name" value="thiE"/>
    <property type="match status" value="1"/>
</dbReference>
<dbReference type="PANTHER" id="PTHR20857">
    <property type="entry name" value="THIAMINE-PHOSPHATE PYROPHOSPHORYLASE"/>
    <property type="match status" value="1"/>
</dbReference>
<dbReference type="PANTHER" id="PTHR20857:SF15">
    <property type="entry name" value="THIAMINE-PHOSPHATE SYNTHASE"/>
    <property type="match status" value="1"/>
</dbReference>
<dbReference type="Pfam" id="PF02581">
    <property type="entry name" value="TMP-TENI"/>
    <property type="match status" value="1"/>
</dbReference>
<dbReference type="SUPFAM" id="SSF51391">
    <property type="entry name" value="Thiamin phosphate synthase"/>
    <property type="match status" value="1"/>
</dbReference>
<reference key="1">
    <citation type="journal article" date="2011" name="Appl. Environ. Microbiol.">
        <title>Genomic potential of Marinobacter aquaeolei, a biogeochemical 'opportunitroph'.</title>
        <authorList>
            <person name="Singer E."/>
            <person name="Webb E.A."/>
            <person name="Nelson W.C."/>
            <person name="Heidelberg J.F."/>
            <person name="Ivanova N."/>
            <person name="Pati A."/>
            <person name="Edwards K.J."/>
        </authorList>
    </citation>
    <scope>NUCLEOTIDE SEQUENCE [LARGE SCALE GENOMIC DNA]</scope>
    <source>
        <strain>ATCC 700491 / DSM 11845 / VT8</strain>
    </source>
</reference>
<proteinExistence type="inferred from homology"/>